<organism>
    <name type="scientific">Rhodopseudomonas palustris (strain TIE-1)</name>
    <dbReference type="NCBI Taxonomy" id="395960"/>
    <lineage>
        <taxon>Bacteria</taxon>
        <taxon>Pseudomonadati</taxon>
        <taxon>Pseudomonadota</taxon>
        <taxon>Alphaproteobacteria</taxon>
        <taxon>Hyphomicrobiales</taxon>
        <taxon>Nitrobacteraceae</taxon>
        <taxon>Rhodopseudomonas</taxon>
    </lineage>
</organism>
<gene>
    <name evidence="1" type="primary">rpmI</name>
    <name type="ordered locus">Rpal_0040</name>
</gene>
<proteinExistence type="inferred from homology"/>
<comment type="similarity">
    <text evidence="1">Belongs to the bacterial ribosomal protein bL35 family.</text>
</comment>
<protein>
    <recommendedName>
        <fullName evidence="1">Large ribosomal subunit protein bL35</fullName>
    </recommendedName>
    <alternativeName>
        <fullName evidence="3">50S ribosomal protein L35</fullName>
    </alternativeName>
</protein>
<sequence length="66" mass="7547">MPKLKTKSGAKKRFKVTATGKVMSAQRGKRHGMIKRTKKQIRQLRGTRAIFKTDGDNIKKYFLPNA</sequence>
<reference key="1">
    <citation type="submission" date="2008-05" db="EMBL/GenBank/DDBJ databases">
        <title>Complete sequence of Rhodopseudomonas palustris TIE-1.</title>
        <authorList>
            <consortium name="US DOE Joint Genome Institute"/>
            <person name="Lucas S."/>
            <person name="Copeland A."/>
            <person name="Lapidus A."/>
            <person name="Glavina del Rio T."/>
            <person name="Dalin E."/>
            <person name="Tice H."/>
            <person name="Pitluck S."/>
            <person name="Chain P."/>
            <person name="Malfatti S."/>
            <person name="Shin M."/>
            <person name="Vergez L."/>
            <person name="Lang D."/>
            <person name="Schmutz J."/>
            <person name="Larimer F."/>
            <person name="Land M."/>
            <person name="Hauser L."/>
            <person name="Kyrpides N."/>
            <person name="Mikhailova N."/>
            <person name="Emerson D."/>
            <person name="Newman D.K."/>
            <person name="Roden E."/>
            <person name="Richardson P."/>
        </authorList>
    </citation>
    <scope>NUCLEOTIDE SEQUENCE [LARGE SCALE GENOMIC DNA]</scope>
    <source>
        <strain>TIE-1</strain>
    </source>
</reference>
<feature type="chain" id="PRO_1000127400" description="Large ribosomal subunit protein bL35">
    <location>
        <begin position="1"/>
        <end position="66"/>
    </location>
</feature>
<feature type="region of interest" description="Disordered" evidence="2">
    <location>
        <begin position="22"/>
        <end position="41"/>
    </location>
</feature>
<feature type="compositionally biased region" description="Basic residues" evidence="2">
    <location>
        <begin position="27"/>
        <end position="41"/>
    </location>
</feature>
<keyword id="KW-0687">Ribonucleoprotein</keyword>
<keyword id="KW-0689">Ribosomal protein</keyword>
<dbReference type="EMBL" id="CP001096">
    <property type="protein sequence ID" value="ACE98602.1"/>
    <property type="molecule type" value="Genomic_DNA"/>
</dbReference>
<dbReference type="RefSeq" id="WP_011155610.1">
    <property type="nucleotide sequence ID" value="NC_011004.1"/>
</dbReference>
<dbReference type="SMR" id="B3Q5X3"/>
<dbReference type="GeneID" id="66891038"/>
<dbReference type="KEGG" id="rpt:Rpal_0040"/>
<dbReference type="HOGENOM" id="CLU_169643_2_1_5"/>
<dbReference type="OrthoDB" id="9804851at2"/>
<dbReference type="Proteomes" id="UP000001725">
    <property type="component" value="Chromosome"/>
</dbReference>
<dbReference type="GO" id="GO:0022625">
    <property type="term" value="C:cytosolic large ribosomal subunit"/>
    <property type="evidence" value="ECO:0007669"/>
    <property type="project" value="TreeGrafter"/>
</dbReference>
<dbReference type="GO" id="GO:0003735">
    <property type="term" value="F:structural constituent of ribosome"/>
    <property type="evidence" value="ECO:0007669"/>
    <property type="project" value="InterPro"/>
</dbReference>
<dbReference type="GO" id="GO:0006412">
    <property type="term" value="P:translation"/>
    <property type="evidence" value="ECO:0007669"/>
    <property type="project" value="UniProtKB-UniRule"/>
</dbReference>
<dbReference type="FunFam" id="4.10.410.60:FF:000001">
    <property type="entry name" value="50S ribosomal protein L35"/>
    <property type="match status" value="1"/>
</dbReference>
<dbReference type="Gene3D" id="4.10.410.60">
    <property type="match status" value="1"/>
</dbReference>
<dbReference type="HAMAP" id="MF_00514">
    <property type="entry name" value="Ribosomal_bL35"/>
    <property type="match status" value="1"/>
</dbReference>
<dbReference type="InterPro" id="IPR001706">
    <property type="entry name" value="Ribosomal_bL35"/>
</dbReference>
<dbReference type="InterPro" id="IPR021137">
    <property type="entry name" value="Ribosomal_bL35-like"/>
</dbReference>
<dbReference type="InterPro" id="IPR018265">
    <property type="entry name" value="Ribosomal_bL35_CS"/>
</dbReference>
<dbReference type="InterPro" id="IPR037229">
    <property type="entry name" value="Ribosomal_bL35_sf"/>
</dbReference>
<dbReference type="NCBIfam" id="TIGR00001">
    <property type="entry name" value="rpmI_bact"/>
    <property type="match status" value="1"/>
</dbReference>
<dbReference type="PANTHER" id="PTHR33343">
    <property type="entry name" value="54S RIBOSOMAL PROTEIN BL35M"/>
    <property type="match status" value="1"/>
</dbReference>
<dbReference type="PANTHER" id="PTHR33343:SF1">
    <property type="entry name" value="LARGE RIBOSOMAL SUBUNIT PROTEIN BL35M"/>
    <property type="match status" value="1"/>
</dbReference>
<dbReference type="Pfam" id="PF01632">
    <property type="entry name" value="Ribosomal_L35p"/>
    <property type="match status" value="1"/>
</dbReference>
<dbReference type="PRINTS" id="PR00064">
    <property type="entry name" value="RIBOSOMALL35"/>
</dbReference>
<dbReference type="SUPFAM" id="SSF143034">
    <property type="entry name" value="L35p-like"/>
    <property type="match status" value="1"/>
</dbReference>
<dbReference type="PROSITE" id="PS00936">
    <property type="entry name" value="RIBOSOMAL_L35"/>
    <property type="match status" value="1"/>
</dbReference>
<accession>B3Q5X3</accession>
<evidence type="ECO:0000255" key="1">
    <source>
        <dbReference type="HAMAP-Rule" id="MF_00514"/>
    </source>
</evidence>
<evidence type="ECO:0000256" key="2">
    <source>
        <dbReference type="SAM" id="MobiDB-lite"/>
    </source>
</evidence>
<evidence type="ECO:0000305" key="3"/>
<name>RL35_RHOPT</name>